<protein>
    <recommendedName>
        <fullName evidence="1">UPF0352 protein YPDSF_2433</fullName>
    </recommendedName>
</protein>
<reference key="1">
    <citation type="submission" date="2007-02" db="EMBL/GenBank/DDBJ databases">
        <title>Complete sequence of chromosome of Yersinia pestis Pestoides F.</title>
        <authorList>
            <consortium name="US DOE Joint Genome Institute"/>
            <person name="Copeland A."/>
            <person name="Lucas S."/>
            <person name="Lapidus A."/>
            <person name="Barry K."/>
            <person name="Detter J.C."/>
            <person name="Glavina del Rio T."/>
            <person name="Hammon N."/>
            <person name="Israni S."/>
            <person name="Dalin E."/>
            <person name="Tice H."/>
            <person name="Pitluck S."/>
            <person name="Di Bartolo G."/>
            <person name="Chain P."/>
            <person name="Malfatti S."/>
            <person name="Shin M."/>
            <person name="Vergez L."/>
            <person name="Schmutz J."/>
            <person name="Larimer F."/>
            <person name="Land M."/>
            <person name="Hauser L."/>
            <person name="Worsham P."/>
            <person name="Chu M."/>
            <person name="Bearden S."/>
            <person name="Garcia E."/>
            <person name="Richardson P."/>
        </authorList>
    </citation>
    <scope>NUCLEOTIDE SEQUENCE [LARGE SCALE GENOMIC DNA]</scope>
    <source>
        <strain>Pestoides F</strain>
    </source>
</reference>
<feature type="chain" id="PRO_1000062323" description="UPF0352 protein YPDSF_2433">
    <location>
        <begin position="1"/>
        <end position="75"/>
    </location>
</feature>
<proteinExistence type="inferred from homology"/>
<accession>A4TNE6</accession>
<name>Y2433_YERPP</name>
<organism>
    <name type="scientific">Yersinia pestis (strain Pestoides F)</name>
    <dbReference type="NCBI Taxonomy" id="386656"/>
    <lineage>
        <taxon>Bacteria</taxon>
        <taxon>Pseudomonadati</taxon>
        <taxon>Pseudomonadota</taxon>
        <taxon>Gammaproteobacteria</taxon>
        <taxon>Enterobacterales</taxon>
        <taxon>Yersiniaceae</taxon>
        <taxon>Yersinia</taxon>
    </lineage>
</organism>
<gene>
    <name type="ordered locus">YPDSF_2433</name>
</gene>
<sequence length="75" mass="8360">MPQSSRYSDEHVEQLLSELVSVLEKHRTPTDLSLMVLGNMVTNLINTSIAPAQRKVLARSFAEALQASVREDKAH</sequence>
<comment type="similarity">
    <text evidence="1">Belongs to the UPF0352 family.</text>
</comment>
<dbReference type="EMBL" id="CP000668">
    <property type="protein sequence ID" value="ABP40808.1"/>
    <property type="molecule type" value="Genomic_DNA"/>
</dbReference>
<dbReference type="RefSeq" id="WP_002208836.1">
    <property type="nucleotide sequence ID" value="NZ_CP009715.1"/>
</dbReference>
<dbReference type="SMR" id="A4TNE6"/>
<dbReference type="KEGG" id="ypp:YPDSF_2433"/>
<dbReference type="PATRIC" id="fig|386656.14.peg.3945"/>
<dbReference type="Gene3D" id="1.10.3390.10">
    <property type="entry name" value="YejL-like"/>
    <property type="match status" value="1"/>
</dbReference>
<dbReference type="HAMAP" id="MF_00816">
    <property type="entry name" value="UPF0352"/>
    <property type="match status" value="1"/>
</dbReference>
<dbReference type="InterPro" id="IPR009857">
    <property type="entry name" value="UPF0352"/>
</dbReference>
<dbReference type="InterPro" id="IPR023202">
    <property type="entry name" value="YejL_sf"/>
</dbReference>
<dbReference type="NCBIfam" id="NF010242">
    <property type="entry name" value="PRK13689.1"/>
    <property type="match status" value="1"/>
</dbReference>
<dbReference type="Pfam" id="PF07208">
    <property type="entry name" value="DUF1414"/>
    <property type="match status" value="1"/>
</dbReference>
<dbReference type="PIRSF" id="PIRSF006188">
    <property type="entry name" value="UCP006188"/>
    <property type="match status" value="1"/>
</dbReference>
<dbReference type="SUPFAM" id="SSF158651">
    <property type="entry name" value="YejL-like"/>
    <property type="match status" value="1"/>
</dbReference>
<evidence type="ECO:0000255" key="1">
    <source>
        <dbReference type="HAMAP-Rule" id="MF_00816"/>
    </source>
</evidence>